<accession>Q03482</accession>
<accession>D6VSJ0</accession>
<evidence type="ECO:0000256" key="1">
    <source>
        <dbReference type="SAM" id="MobiDB-lite"/>
    </source>
</evidence>
<evidence type="ECO:0000269" key="2">
    <source>
    </source>
</evidence>
<evidence type="ECO:0000269" key="3">
    <source>
    </source>
</evidence>
<evidence type="ECO:0000269" key="4">
    <source>
    </source>
</evidence>
<evidence type="ECO:0000303" key="5">
    <source>
    </source>
</evidence>
<evidence type="ECO:0000305" key="6"/>
<evidence type="ECO:0000305" key="7">
    <source>
    </source>
</evidence>
<sequence length="75" mass="8571">MSQQQGYYQQGPPQQGYYQQGPPQQGYYQQGPPQQGYPQQQPVYVQQGQPKEESCLDSCLKCLCCCFLLELVCDN</sequence>
<gene>
    <name evidence="5" type="primary">CPP2</name>
    <name type="ordered locus">YDR210W</name>
    <name type="ORF">YD8142.07</name>
</gene>
<name>CTPP2_YEAST</name>
<proteinExistence type="evidence at protein level"/>
<organism>
    <name type="scientific">Saccharomyces cerevisiae (strain ATCC 204508 / S288c)</name>
    <name type="common">Baker's yeast</name>
    <dbReference type="NCBI Taxonomy" id="559292"/>
    <lineage>
        <taxon>Eukaryota</taxon>
        <taxon>Fungi</taxon>
        <taxon>Dikarya</taxon>
        <taxon>Ascomycota</taxon>
        <taxon>Saccharomycotina</taxon>
        <taxon>Saccharomycetes</taxon>
        <taxon>Saccharomycetales</taxon>
        <taxon>Saccharomycetaceae</taxon>
        <taxon>Saccharomyces</taxon>
    </lineage>
</organism>
<dbReference type="EMBL" id="Z68194">
    <property type="protein sequence ID" value="CAA92349.1"/>
    <property type="molecule type" value="Genomic_DNA"/>
</dbReference>
<dbReference type="EMBL" id="AY557658">
    <property type="protein sequence ID" value="AAS55984.1"/>
    <property type="molecule type" value="Genomic_DNA"/>
</dbReference>
<dbReference type="EMBL" id="BK006938">
    <property type="protein sequence ID" value="DAA12050.1"/>
    <property type="molecule type" value="Genomic_DNA"/>
</dbReference>
<dbReference type="PIR" id="S61573">
    <property type="entry name" value="S61573"/>
</dbReference>
<dbReference type="RefSeq" id="NP_010496.3">
    <property type="nucleotide sequence ID" value="NM_001180518.3"/>
</dbReference>
<dbReference type="BioGRID" id="32259">
    <property type="interactions" value="68"/>
</dbReference>
<dbReference type="FunCoup" id="Q03482">
    <property type="interactions" value="51"/>
</dbReference>
<dbReference type="STRING" id="4932.YDR210W"/>
<dbReference type="PaxDb" id="4932-YDR210W"/>
<dbReference type="PeptideAtlas" id="Q03482"/>
<dbReference type="EnsemblFungi" id="YDR210W_mRNA">
    <property type="protein sequence ID" value="YDR210W"/>
    <property type="gene ID" value="YDR210W"/>
</dbReference>
<dbReference type="GeneID" id="851790"/>
<dbReference type="KEGG" id="sce:YDR210W"/>
<dbReference type="AGR" id="SGD:S000002618"/>
<dbReference type="SGD" id="S000002618">
    <property type="gene designation" value="CPP2"/>
</dbReference>
<dbReference type="VEuPathDB" id="FungiDB:YDR210W"/>
<dbReference type="HOGENOM" id="CLU_156676_1_0_1"/>
<dbReference type="InParanoid" id="Q03482"/>
<dbReference type="OMA" id="EESCECC"/>
<dbReference type="BioCyc" id="YEAST:G3O-29792-MONOMER"/>
<dbReference type="BioGRID-ORCS" id="851790">
    <property type="hits" value="8 hits in 10 CRISPR screens"/>
</dbReference>
<dbReference type="PRO" id="PR:Q03482"/>
<dbReference type="Proteomes" id="UP000002311">
    <property type="component" value="Chromosome IV"/>
</dbReference>
<dbReference type="RNAct" id="Q03482">
    <property type="molecule type" value="protein"/>
</dbReference>
<dbReference type="GO" id="GO:0005886">
    <property type="term" value="C:plasma membrane"/>
    <property type="evidence" value="ECO:0000314"/>
    <property type="project" value="SGD"/>
</dbReference>
<dbReference type="InterPro" id="IPR028144">
    <property type="entry name" value="CYSTM_dom"/>
</dbReference>
<dbReference type="Pfam" id="PF12734">
    <property type="entry name" value="CYSTM"/>
    <property type="match status" value="1"/>
</dbReference>
<reference key="1">
    <citation type="journal article" date="1997" name="Nature">
        <title>The nucleotide sequence of Saccharomyces cerevisiae chromosome IV.</title>
        <authorList>
            <person name="Jacq C."/>
            <person name="Alt-Moerbe J."/>
            <person name="Andre B."/>
            <person name="Arnold W."/>
            <person name="Bahr A."/>
            <person name="Ballesta J.P.G."/>
            <person name="Bargues M."/>
            <person name="Baron L."/>
            <person name="Becker A."/>
            <person name="Biteau N."/>
            <person name="Bloecker H."/>
            <person name="Blugeon C."/>
            <person name="Boskovic J."/>
            <person name="Brandt P."/>
            <person name="Brueckner M."/>
            <person name="Buitrago M.J."/>
            <person name="Coster F."/>
            <person name="Delaveau T."/>
            <person name="del Rey F."/>
            <person name="Dujon B."/>
            <person name="Eide L.G."/>
            <person name="Garcia-Cantalejo J.M."/>
            <person name="Goffeau A."/>
            <person name="Gomez-Peris A."/>
            <person name="Granotier C."/>
            <person name="Hanemann V."/>
            <person name="Hankeln T."/>
            <person name="Hoheisel J.D."/>
            <person name="Jaeger W."/>
            <person name="Jimenez A."/>
            <person name="Jonniaux J.-L."/>
            <person name="Kraemer C."/>
            <person name="Kuester H."/>
            <person name="Laamanen P."/>
            <person name="Legros Y."/>
            <person name="Louis E.J."/>
            <person name="Moeller-Rieker S."/>
            <person name="Monnet A."/>
            <person name="Moro M."/>
            <person name="Mueller-Auer S."/>
            <person name="Nussbaumer B."/>
            <person name="Paricio N."/>
            <person name="Paulin L."/>
            <person name="Perea J."/>
            <person name="Perez-Alonso M."/>
            <person name="Perez-Ortin J.E."/>
            <person name="Pohl T.M."/>
            <person name="Prydz H."/>
            <person name="Purnelle B."/>
            <person name="Rasmussen S.W."/>
            <person name="Remacha M.A."/>
            <person name="Revuelta J.L."/>
            <person name="Rieger M."/>
            <person name="Salom D."/>
            <person name="Saluz H.P."/>
            <person name="Saiz J.E."/>
            <person name="Saren A.-M."/>
            <person name="Schaefer M."/>
            <person name="Scharfe M."/>
            <person name="Schmidt E.R."/>
            <person name="Schneider C."/>
            <person name="Scholler P."/>
            <person name="Schwarz S."/>
            <person name="Soler-Mira A."/>
            <person name="Urrestarazu L.A."/>
            <person name="Verhasselt P."/>
            <person name="Vissers S."/>
            <person name="Voet M."/>
            <person name="Volckaert G."/>
            <person name="Wagner G."/>
            <person name="Wambutt R."/>
            <person name="Wedler E."/>
            <person name="Wedler H."/>
            <person name="Woelfl S."/>
            <person name="Harris D.E."/>
            <person name="Bowman S."/>
            <person name="Brown D."/>
            <person name="Churcher C.M."/>
            <person name="Connor R."/>
            <person name="Dedman K."/>
            <person name="Gentles S."/>
            <person name="Hamlin N."/>
            <person name="Hunt S."/>
            <person name="Jones L."/>
            <person name="McDonald S."/>
            <person name="Murphy L.D."/>
            <person name="Niblett D."/>
            <person name="Odell C."/>
            <person name="Oliver K."/>
            <person name="Rajandream M.A."/>
            <person name="Richards C."/>
            <person name="Shore L."/>
            <person name="Walsh S.V."/>
            <person name="Barrell B.G."/>
            <person name="Dietrich F.S."/>
            <person name="Mulligan J.T."/>
            <person name="Allen E."/>
            <person name="Araujo R."/>
            <person name="Aviles E."/>
            <person name="Berno A."/>
            <person name="Carpenter J."/>
            <person name="Chen E."/>
            <person name="Cherry J.M."/>
            <person name="Chung E."/>
            <person name="Duncan M."/>
            <person name="Hunicke-Smith S."/>
            <person name="Hyman R.W."/>
            <person name="Komp C."/>
            <person name="Lashkari D."/>
            <person name="Lew H."/>
            <person name="Lin D."/>
            <person name="Mosedale D."/>
            <person name="Nakahara K."/>
            <person name="Namath A."/>
            <person name="Oefner P."/>
            <person name="Oh C."/>
            <person name="Petel F.X."/>
            <person name="Roberts D."/>
            <person name="Schramm S."/>
            <person name="Schroeder M."/>
            <person name="Shogren T."/>
            <person name="Shroff N."/>
            <person name="Winant A."/>
            <person name="Yelton M.A."/>
            <person name="Botstein D."/>
            <person name="Davis R.W."/>
            <person name="Johnston M."/>
            <person name="Andrews S."/>
            <person name="Brinkman R."/>
            <person name="Cooper J."/>
            <person name="Ding H."/>
            <person name="Du Z."/>
            <person name="Favello A."/>
            <person name="Fulton L."/>
            <person name="Gattung S."/>
            <person name="Greco T."/>
            <person name="Hallsworth K."/>
            <person name="Hawkins J."/>
            <person name="Hillier L.W."/>
            <person name="Jier M."/>
            <person name="Johnson D."/>
            <person name="Johnston L."/>
            <person name="Kirsten J."/>
            <person name="Kucaba T."/>
            <person name="Langston Y."/>
            <person name="Latreille P."/>
            <person name="Le T."/>
            <person name="Mardis E."/>
            <person name="Menezes S."/>
            <person name="Miller N."/>
            <person name="Nhan M."/>
            <person name="Pauley A."/>
            <person name="Peluso D."/>
            <person name="Rifkin L."/>
            <person name="Riles L."/>
            <person name="Taich A."/>
            <person name="Trevaskis E."/>
            <person name="Vignati D."/>
            <person name="Wilcox L."/>
            <person name="Wohldman P."/>
            <person name="Vaudin M."/>
            <person name="Wilson R."/>
            <person name="Waterston R."/>
            <person name="Albermann K."/>
            <person name="Hani J."/>
            <person name="Heumann K."/>
            <person name="Kleine K."/>
            <person name="Mewes H.-W."/>
            <person name="Zollner A."/>
            <person name="Zaccaria P."/>
        </authorList>
    </citation>
    <scope>NUCLEOTIDE SEQUENCE [LARGE SCALE GENOMIC DNA]</scope>
    <source>
        <strain>ATCC 204508 / S288c</strain>
    </source>
</reference>
<reference key="2">
    <citation type="journal article" date="2014" name="G3 (Bethesda)">
        <title>The reference genome sequence of Saccharomyces cerevisiae: Then and now.</title>
        <authorList>
            <person name="Engel S.R."/>
            <person name="Dietrich F.S."/>
            <person name="Fisk D.G."/>
            <person name="Binkley G."/>
            <person name="Balakrishnan R."/>
            <person name="Costanzo M.C."/>
            <person name="Dwight S.S."/>
            <person name="Hitz B.C."/>
            <person name="Karra K."/>
            <person name="Nash R.S."/>
            <person name="Weng S."/>
            <person name="Wong E.D."/>
            <person name="Lloyd P."/>
            <person name="Skrzypek M.S."/>
            <person name="Miyasato S.R."/>
            <person name="Simison M."/>
            <person name="Cherry J.M."/>
        </authorList>
    </citation>
    <scope>GENOME REANNOTATION</scope>
    <source>
        <strain>ATCC 204508 / S288c</strain>
    </source>
</reference>
<reference key="3">
    <citation type="journal article" date="2007" name="Genome Res.">
        <title>Approaching a complete repository of sequence-verified protein-encoding clones for Saccharomyces cerevisiae.</title>
        <authorList>
            <person name="Hu Y."/>
            <person name="Rolfs A."/>
            <person name="Bhullar B."/>
            <person name="Murthy T.V.S."/>
            <person name="Zhu C."/>
            <person name="Berger M.F."/>
            <person name="Camargo A.A."/>
            <person name="Kelley F."/>
            <person name="McCarron S."/>
            <person name="Jepson D."/>
            <person name="Richardson A."/>
            <person name="Raphael J."/>
            <person name="Moreira D."/>
            <person name="Taycher E."/>
            <person name="Zuo D."/>
            <person name="Mohr S."/>
            <person name="Kane M.F."/>
            <person name="Williamson J."/>
            <person name="Simpson A.J.G."/>
            <person name="Bulyk M.L."/>
            <person name="Harlow E."/>
            <person name="Marsischky G."/>
            <person name="Kolodner R.D."/>
            <person name="LaBaer J."/>
        </authorList>
    </citation>
    <scope>NUCLEOTIDE SEQUENCE [GENOMIC DNA]</scope>
    <source>
        <strain>ATCC 204508 / S288c</strain>
    </source>
</reference>
<reference key="4">
    <citation type="journal article" date="2003" name="Nature">
        <title>Global analysis of protein localization in budding yeast.</title>
        <authorList>
            <person name="Huh W.-K."/>
            <person name="Falvo J.V."/>
            <person name="Gerke L.C."/>
            <person name="Carroll A.S."/>
            <person name="Howson R.W."/>
            <person name="Weissman J.S."/>
            <person name="O'Shea E.K."/>
        </authorList>
    </citation>
    <scope>SUBCELLULAR LOCATION [LARGE SCALE ANALYSIS]</scope>
</reference>
<reference key="5">
    <citation type="journal article" date="2003" name="Nature">
        <title>Global analysis of protein expression in yeast.</title>
        <authorList>
            <person name="Ghaemmaghami S."/>
            <person name="Huh W.-K."/>
            <person name="Bower K."/>
            <person name="Howson R.W."/>
            <person name="Belle A."/>
            <person name="Dephoure N."/>
            <person name="O'Shea E.K."/>
            <person name="Weissman J.S."/>
        </authorList>
    </citation>
    <scope>LEVEL OF PROTEIN EXPRESSION [LARGE SCALE ANALYSIS]</scope>
</reference>
<reference key="6">
    <citation type="journal article" date="2024" name="J. Biol. Chem.">
        <title>Palmitoylation of CYSTM (CYSPD) proteins in yeast.</title>
        <authorList>
            <person name="Giolito M.L."/>
            <person name="Bigliani G."/>
            <person name="Meinero R."/>
            <person name="Taubas J.V."/>
        </authorList>
    </citation>
    <scope>SUBCELLULAR LOCATION</scope>
    <scope>PALMITOYLATION</scope>
</reference>
<protein>
    <recommendedName>
        <fullName evidence="6">Lipid-anchored plasma membrane protein CPP2</fullName>
    </recommendedName>
    <alternativeName>
        <fullName evidence="5">C-terminally palmitoylated protein CPP2</fullName>
    </alternativeName>
    <alternativeName>
        <fullName evidence="6">Cysteine-rich protein CPP2</fullName>
    </alternativeName>
</protein>
<comment type="subcellular location">
    <subcellularLocation>
        <location evidence="2 4">Cell membrane</location>
        <topology evidence="4">Lipid-anchor</topology>
    </subcellularLocation>
    <text evidence="4">Localization is partially skewed towards the growing bud, and this localization pattern is dependent on endocytosis and polarized secretion.</text>
</comment>
<comment type="PTM">
    <text evidence="4">Palmitoylated near the C-terminus.</text>
</comment>
<comment type="miscellaneous">
    <text evidence="3">Present with 13100 molecules/cell in log phase SD medium.</text>
</comment>
<comment type="similarity">
    <text evidence="6">Belongs to the CYSTM1 family.</text>
</comment>
<comment type="caution">
    <text evidence="7">Was predicted to contain a transmembrane helix, however experiments suggest that this region of the protein is not buried in the plasma membrane and is palmitoylated.</text>
</comment>
<keyword id="KW-1003">Cell membrane</keyword>
<keyword id="KW-0449">Lipoprotein</keyword>
<keyword id="KW-0472">Membrane</keyword>
<keyword id="KW-1185">Reference proteome</keyword>
<keyword id="KW-0677">Repeat</keyword>
<feature type="chain" id="PRO_0000253837" description="Lipid-anchored plasma membrane protein CPP2">
    <location>
        <begin position="1"/>
        <end position="75"/>
    </location>
</feature>
<feature type="repeat" description="1">
    <location>
        <begin position="4"/>
        <end position="13"/>
    </location>
</feature>
<feature type="repeat" description="2">
    <location>
        <begin position="14"/>
        <end position="23"/>
    </location>
</feature>
<feature type="repeat" description="3">
    <location>
        <begin position="24"/>
        <end position="33"/>
    </location>
</feature>
<feature type="region of interest" description="Disordered" evidence="1">
    <location>
        <begin position="1"/>
        <end position="43"/>
    </location>
</feature>
<feature type="region of interest" description="3 X 10 AA tandem repeats of Q-Q-G-Y-Y-Q-Q-G-P-P">
    <location>
        <begin position="4"/>
        <end position="33"/>
    </location>
</feature>